<feature type="chain" id="PRO_0000270642" description="Large ribosomal subunit protein bL21">
    <location>
        <begin position="1"/>
        <end position="103"/>
    </location>
</feature>
<dbReference type="EMBL" id="CP000395">
    <property type="protein sequence ID" value="ABH02052.1"/>
    <property type="molecule type" value="Genomic_DNA"/>
</dbReference>
<dbReference type="EMBL" id="CP002933">
    <property type="protein sequence ID" value="AEL69994.1"/>
    <property type="molecule type" value="Genomic_DNA"/>
</dbReference>
<dbReference type="RefSeq" id="WP_004789922.1">
    <property type="nucleotide sequence ID" value="NZ_CP160066.1"/>
</dbReference>
<dbReference type="SMR" id="Q0SM76"/>
<dbReference type="STRING" id="29518.BLA32_00335"/>
<dbReference type="GeneID" id="76832320"/>
<dbReference type="KEGG" id="baf:BAPKO_0827"/>
<dbReference type="KEGG" id="bafz:BafPKo_0804"/>
<dbReference type="PATRIC" id="fig|390236.22.peg.767"/>
<dbReference type="eggNOG" id="COG0261">
    <property type="taxonomic scope" value="Bacteria"/>
</dbReference>
<dbReference type="HOGENOM" id="CLU_061463_3_2_12"/>
<dbReference type="OrthoDB" id="9813334at2"/>
<dbReference type="Proteomes" id="UP000005216">
    <property type="component" value="Chromosome"/>
</dbReference>
<dbReference type="GO" id="GO:0005737">
    <property type="term" value="C:cytoplasm"/>
    <property type="evidence" value="ECO:0007669"/>
    <property type="project" value="UniProtKB-ARBA"/>
</dbReference>
<dbReference type="GO" id="GO:1990904">
    <property type="term" value="C:ribonucleoprotein complex"/>
    <property type="evidence" value="ECO:0007669"/>
    <property type="project" value="UniProtKB-KW"/>
</dbReference>
<dbReference type="GO" id="GO:0005840">
    <property type="term" value="C:ribosome"/>
    <property type="evidence" value="ECO:0007669"/>
    <property type="project" value="UniProtKB-KW"/>
</dbReference>
<dbReference type="GO" id="GO:0019843">
    <property type="term" value="F:rRNA binding"/>
    <property type="evidence" value="ECO:0007669"/>
    <property type="project" value="UniProtKB-UniRule"/>
</dbReference>
<dbReference type="GO" id="GO:0003735">
    <property type="term" value="F:structural constituent of ribosome"/>
    <property type="evidence" value="ECO:0007669"/>
    <property type="project" value="InterPro"/>
</dbReference>
<dbReference type="GO" id="GO:0006412">
    <property type="term" value="P:translation"/>
    <property type="evidence" value="ECO:0007669"/>
    <property type="project" value="UniProtKB-UniRule"/>
</dbReference>
<dbReference type="HAMAP" id="MF_01363">
    <property type="entry name" value="Ribosomal_bL21"/>
    <property type="match status" value="1"/>
</dbReference>
<dbReference type="InterPro" id="IPR028909">
    <property type="entry name" value="bL21-like"/>
</dbReference>
<dbReference type="InterPro" id="IPR036164">
    <property type="entry name" value="bL21-like_sf"/>
</dbReference>
<dbReference type="InterPro" id="IPR001787">
    <property type="entry name" value="Ribosomal_bL21"/>
</dbReference>
<dbReference type="InterPro" id="IPR018258">
    <property type="entry name" value="Ribosomal_bL21_CS"/>
</dbReference>
<dbReference type="NCBIfam" id="TIGR00061">
    <property type="entry name" value="L21"/>
    <property type="match status" value="1"/>
</dbReference>
<dbReference type="PANTHER" id="PTHR21349">
    <property type="entry name" value="50S RIBOSOMAL PROTEIN L21"/>
    <property type="match status" value="1"/>
</dbReference>
<dbReference type="PANTHER" id="PTHR21349:SF0">
    <property type="entry name" value="LARGE RIBOSOMAL SUBUNIT PROTEIN BL21M"/>
    <property type="match status" value="1"/>
</dbReference>
<dbReference type="Pfam" id="PF00829">
    <property type="entry name" value="Ribosomal_L21p"/>
    <property type="match status" value="1"/>
</dbReference>
<dbReference type="SUPFAM" id="SSF141091">
    <property type="entry name" value="L21p-like"/>
    <property type="match status" value="1"/>
</dbReference>
<dbReference type="PROSITE" id="PS01169">
    <property type="entry name" value="RIBOSOMAL_L21"/>
    <property type="match status" value="1"/>
</dbReference>
<comment type="function">
    <text evidence="1">This protein binds to 23S rRNA in the presence of protein L20.</text>
</comment>
<comment type="subunit">
    <text evidence="1">Part of the 50S ribosomal subunit. Contacts protein L20.</text>
</comment>
<comment type="similarity">
    <text evidence="1">Belongs to the bacterial ribosomal protein bL21 family.</text>
</comment>
<proteinExistence type="inferred from homology"/>
<keyword id="KW-0687">Ribonucleoprotein</keyword>
<keyword id="KW-0689">Ribosomal protein</keyword>
<keyword id="KW-0694">RNA-binding</keyword>
<keyword id="KW-0699">rRNA-binding</keyword>
<protein>
    <recommendedName>
        <fullName evidence="1">Large ribosomal subunit protein bL21</fullName>
    </recommendedName>
    <alternativeName>
        <fullName evidence="2">50S ribosomal protein L21</fullName>
    </alternativeName>
</protein>
<organism>
    <name type="scientific">Borreliella afzelii (strain PKo)</name>
    <name type="common">Borrelia afzelii</name>
    <dbReference type="NCBI Taxonomy" id="390236"/>
    <lineage>
        <taxon>Bacteria</taxon>
        <taxon>Pseudomonadati</taxon>
        <taxon>Spirochaetota</taxon>
        <taxon>Spirochaetia</taxon>
        <taxon>Spirochaetales</taxon>
        <taxon>Borreliaceae</taxon>
        <taxon>Borreliella</taxon>
    </lineage>
</organism>
<accession>Q0SM76</accession>
<accession>G0IRV9</accession>
<sequence>MYALVEINGKQYKAVEGEFLKIDKISPIEKEKLEFNSVLLINKDGEIKIGKPYVINSSIKCTYKEDKKDKKVVSYRYRRRKSSERKVGHRQTYSYILVDEIVF</sequence>
<reference key="1">
    <citation type="journal article" date="2006" name="BMC Genomics">
        <title>Comparative genome analysis: selection pressure on the Borrelia vls cassettes is essential for infectivity.</title>
        <authorList>
            <person name="Gloeckner G."/>
            <person name="Schulte-Spechtel U."/>
            <person name="Schilhabel M."/>
            <person name="Felder M."/>
            <person name="Suehnel J."/>
            <person name="Wilske B."/>
            <person name="Platzer M."/>
        </authorList>
    </citation>
    <scope>NUCLEOTIDE SEQUENCE [LARGE SCALE GENOMIC DNA]</scope>
    <source>
        <strain>PKo</strain>
    </source>
</reference>
<reference key="2">
    <citation type="journal article" date="2011" name="J. Bacteriol.">
        <title>Whole-genome sequences of two Borrelia afzelii and two Borrelia garinii Lyme disease agent isolates.</title>
        <authorList>
            <person name="Casjens S.R."/>
            <person name="Mongodin E.F."/>
            <person name="Qiu W.G."/>
            <person name="Dunn J.J."/>
            <person name="Luft B.J."/>
            <person name="Fraser-Liggett C.M."/>
            <person name="Schutzer S.E."/>
        </authorList>
    </citation>
    <scope>NUCLEOTIDE SEQUENCE [LARGE SCALE GENOMIC DNA]</scope>
    <source>
        <strain>PKo</strain>
    </source>
</reference>
<gene>
    <name evidence="1" type="primary">rplU</name>
    <name type="ordered locus">BAPKO_0827</name>
    <name type="ordered locus">BafPKo_0804</name>
</gene>
<evidence type="ECO:0000255" key="1">
    <source>
        <dbReference type="HAMAP-Rule" id="MF_01363"/>
    </source>
</evidence>
<evidence type="ECO:0000305" key="2"/>
<name>RL21_BORAP</name>